<reference key="1">
    <citation type="journal article" date="2006" name="J. Bacteriol.">
        <title>Genome sequence of Aeromonas hydrophila ATCC 7966T: jack of all trades.</title>
        <authorList>
            <person name="Seshadri R."/>
            <person name="Joseph S.W."/>
            <person name="Chopra A.K."/>
            <person name="Sha J."/>
            <person name="Shaw J."/>
            <person name="Graf J."/>
            <person name="Haft D.H."/>
            <person name="Wu M."/>
            <person name="Ren Q."/>
            <person name="Rosovitz M.J."/>
            <person name="Madupu R."/>
            <person name="Tallon L."/>
            <person name="Kim M."/>
            <person name="Jin S."/>
            <person name="Vuong H."/>
            <person name="Stine O.C."/>
            <person name="Ali A."/>
            <person name="Horneman A.J."/>
            <person name="Heidelberg J.F."/>
        </authorList>
    </citation>
    <scope>NUCLEOTIDE SEQUENCE [LARGE SCALE GENOMIC DNA]</scope>
    <source>
        <strain>ATCC 7966 / DSM 30187 / BCRC 13018 / CCUG 14551 / JCM 1027 / KCTC 2358 / NCIMB 9240 / NCTC 8049</strain>
    </source>
</reference>
<accession>A0KPC4</accession>
<evidence type="ECO:0000255" key="1">
    <source>
        <dbReference type="HAMAP-Rule" id="MF_01872"/>
    </source>
</evidence>
<organism>
    <name type="scientific">Aeromonas hydrophila subsp. hydrophila (strain ATCC 7966 / DSM 30187 / BCRC 13018 / CCUG 14551 / JCM 1027 / KCTC 2358 / NCIMB 9240 / NCTC 8049)</name>
    <dbReference type="NCBI Taxonomy" id="380703"/>
    <lineage>
        <taxon>Bacteria</taxon>
        <taxon>Pseudomonadati</taxon>
        <taxon>Pseudomonadota</taxon>
        <taxon>Gammaproteobacteria</taxon>
        <taxon>Aeromonadales</taxon>
        <taxon>Aeromonadaceae</taxon>
        <taxon>Aeromonas</taxon>
    </lineage>
</organism>
<dbReference type="EC" id="2.1.1.223" evidence="1"/>
<dbReference type="EMBL" id="CP000462">
    <property type="protein sequence ID" value="ABK36818.1"/>
    <property type="molecule type" value="Genomic_DNA"/>
</dbReference>
<dbReference type="RefSeq" id="WP_011707393.1">
    <property type="nucleotide sequence ID" value="NC_008570.1"/>
</dbReference>
<dbReference type="RefSeq" id="YP_858125.1">
    <property type="nucleotide sequence ID" value="NC_008570.1"/>
</dbReference>
<dbReference type="SMR" id="A0KPC4"/>
<dbReference type="STRING" id="380703.AHA_3669"/>
<dbReference type="EnsemblBacteria" id="ABK36818">
    <property type="protein sequence ID" value="ABK36818"/>
    <property type="gene ID" value="AHA_3669"/>
</dbReference>
<dbReference type="GeneID" id="4487751"/>
<dbReference type="KEGG" id="aha:AHA_3669"/>
<dbReference type="PATRIC" id="fig|380703.7.peg.3645"/>
<dbReference type="eggNOG" id="COG4123">
    <property type="taxonomic scope" value="Bacteria"/>
</dbReference>
<dbReference type="HOGENOM" id="CLU_061983_0_0_6"/>
<dbReference type="OrthoDB" id="5383291at2"/>
<dbReference type="Proteomes" id="UP000000756">
    <property type="component" value="Chromosome"/>
</dbReference>
<dbReference type="GO" id="GO:0005737">
    <property type="term" value="C:cytoplasm"/>
    <property type="evidence" value="ECO:0007669"/>
    <property type="project" value="UniProtKB-SubCell"/>
</dbReference>
<dbReference type="GO" id="GO:0003676">
    <property type="term" value="F:nucleic acid binding"/>
    <property type="evidence" value="ECO:0007669"/>
    <property type="project" value="InterPro"/>
</dbReference>
<dbReference type="GO" id="GO:0016430">
    <property type="term" value="F:tRNA (adenine-N6)-methyltransferase activity"/>
    <property type="evidence" value="ECO:0007669"/>
    <property type="project" value="UniProtKB-UniRule"/>
</dbReference>
<dbReference type="GO" id="GO:0032259">
    <property type="term" value="P:methylation"/>
    <property type="evidence" value="ECO:0007669"/>
    <property type="project" value="UniProtKB-KW"/>
</dbReference>
<dbReference type="GO" id="GO:0008033">
    <property type="term" value="P:tRNA processing"/>
    <property type="evidence" value="ECO:0007669"/>
    <property type="project" value="UniProtKB-UniRule"/>
</dbReference>
<dbReference type="CDD" id="cd02440">
    <property type="entry name" value="AdoMet_MTases"/>
    <property type="match status" value="1"/>
</dbReference>
<dbReference type="Gene3D" id="3.40.50.150">
    <property type="entry name" value="Vaccinia Virus protein VP39"/>
    <property type="match status" value="1"/>
</dbReference>
<dbReference type="HAMAP" id="MF_01872">
    <property type="entry name" value="tRNA_methyltr_YfiC"/>
    <property type="match status" value="1"/>
</dbReference>
<dbReference type="InterPro" id="IPR002052">
    <property type="entry name" value="DNA_methylase_N6_adenine_CS"/>
</dbReference>
<dbReference type="InterPro" id="IPR029063">
    <property type="entry name" value="SAM-dependent_MTases_sf"/>
</dbReference>
<dbReference type="InterPro" id="IPR007848">
    <property type="entry name" value="Small_mtfrase_dom"/>
</dbReference>
<dbReference type="InterPro" id="IPR050210">
    <property type="entry name" value="tRNA_Adenine-N(6)_MTase"/>
</dbReference>
<dbReference type="InterPro" id="IPR022882">
    <property type="entry name" value="tRNA_adenine-N6_MeTrfase"/>
</dbReference>
<dbReference type="PANTHER" id="PTHR47739">
    <property type="entry name" value="TRNA1(VAL) (ADENINE(37)-N6)-METHYLTRANSFERASE"/>
    <property type="match status" value="1"/>
</dbReference>
<dbReference type="PANTHER" id="PTHR47739:SF1">
    <property type="entry name" value="TRNA1(VAL) (ADENINE(37)-N6)-METHYLTRANSFERASE"/>
    <property type="match status" value="1"/>
</dbReference>
<dbReference type="Pfam" id="PF05175">
    <property type="entry name" value="MTS"/>
    <property type="match status" value="1"/>
</dbReference>
<dbReference type="SUPFAM" id="SSF53335">
    <property type="entry name" value="S-adenosyl-L-methionine-dependent methyltransferases"/>
    <property type="match status" value="1"/>
</dbReference>
<dbReference type="PROSITE" id="PS00092">
    <property type="entry name" value="N6_MTASE"/>
    <property type="match status" value="1"/>
</dbReference>
<protein>
    <recommendedName>
        <fullName evidence="1">tRNA1(Val) (adenine(37)-N6)-methyltransferase</fullName>
        <ecNumber evidence="1">2.1.1.223</ecNumber>
    </recommendedName>
    <alternativeName>
        <fullName evidence="1">tRNA m6A37 methyltransferase</fullName>
    </alternativeName>
</protein>
<sequence>MGRNSGFTFKQFHVDHDRCAMKVGTDGILLGAWAPVTNARRVLDIGSGSGLIALMLAQRSPADCRIDAVELDSNAARQARENAAASPWHERVTVIESAIQTYQATPYDLIVSNPPYFVAGQSFRDPARALARHTGGLDSRDLLAACDRLLAPNGEVALVVPTAMADEILCISADYDLHAVCYTAVITRAGKEANRVLLRLGRGLNKCEQGEIVIHSADGTYSDRYIQLTSPFYLKM</sequence>
<comment type="function">
    <text evidence="1">Specifically methylates the adenine in position 37 of tRNA(1)(Val) (anticodon cmo5UAC).</text>
</comment>
<comment type="catalytic activity">
    <reaction evidence="1">
        <text>adenosine(37) in tRNA1(Val) + S-adenosyl-L-methionine = N(6)-methyladenosine(37) in tRNA1(Val) + S-adenosyl-L-homocysteine + H(+)</text>
        <dbReference type="Rhea" id="RHEA:43160"/>
        <dbReference type="Rhea" id="RHEA-COMP:10369"/>
        <dbReference type="Rhea" id="RHEA-COMP:10370"/>
        <dbReference type="ChEBI" id="CHEBI:15378"/>
        <dbReference type="ChEBI" id="CHEBI:57856"/>
        <dbReference type="ChEBI" id="CHEBI:59789"/>
        <dbReference type="ChEBI" id="CHEBI:74411"/>
        <dbReference type="ChEBI" id="CHEBI:74449"/>
        <dbReference type="EC" id="2.1.1.223"/>
    </reaction>
</comment>
<comment type="subcellular location">
    <subcellularLocation>
        <location evidence="1">Cytoplasm</location>
    </subcellularLocation>
</comment>
<comment type="similarity">
    <text evidence="1">Belongs to the methyltransferase superfamily. tRNA (adenine-N(6)-)-methyltransferase family.</text>
</comment>
<keyword id="KW-0963">Cytoplasm</keyword>
<keyword id="KW-0489">Methyltransferase</keyword>
<keyword id="KW-1185">Reference proteome</keyword>
<keyword id="KW-0949">S-adenosyl-L-methionine</keyword>
<keyword id="KW-0808">Transferase</keyword>
<keyword id="KW-0819">tRNA processing</keyword>
<name>TRMN6_AERHH</name>
<feature type="chain" id="PRO_0000387336" description="tRNA1(Val) (adenine(37)-N6)-methyltransferase">
    <location>
        <begin position="1"/>
        <end position="236"/>
    </location>
</feature>
<proteinExistence type="inferred from homology"/>
<gene>
    <name type="ordered locus">AHA_3669</name>
</gene>